<protein>
    <recommendedName>
        <fullName>Bowman-Birk type proteinase inhibitor C-II</fullName>
    </recommendedName>
</protein>
<name>IBBC2_SOYBN</name>
<sequence length="83" mass="9201">MELNLFKSDHSSSDDESSKPCCDLCMCTASMPPQCHCADIRLNSCHSACDRCACTRSMPGQCRCLDTTDFCYKPCKSSDEDDD</sequence>
<reference key="1">
    <citation type="journal article" date="1987" name="Plant Mol. Biol.">
        <title>Isolation and sequence of cDNA encoding the soybean protease inhibitors PI IV and C-II.</title>
        <authorList>
            <person name="Joudrier P.E."/>
            <person name="Foard D.E."/>
            <person name="Floener L.A."/>
            <person name="Larkins B.A."/>
        </authorList>
        <dbReference type="AGRICOLA" id="IND92000914"/>
    </citation>
    <scope>NUCLEOTIDE SEQUENCE [MRNA]</scope>
</reference>
<reference key="2">
    <citation type="journal article" date="1994" name="Biosci. Biotechnol. Biochem.">
        <title>Nucleotide sequence homology of cDNAs encoding soybean Bowman-Birk type proteinase inhibitor and its isoinhibitors.</title>
        <authorList>
            <person name="Baek J.M."/>
            <person name="Song J.C."/>
            <person name="Choi Y.D."/>
            <person name="Kim S.I."/>
        </authorList>
    </citation>
    <scope>NUCLEOTIDE SEQUENCE [MRNA]</scope>
    <source>
        <strain>cv. Paldal</strain>
        <tissue>Seed</tissue>
    </source>
</reference>
<reference key="3">
    <citation type="submission" date="1993-12" db="EMBL/GenBank/DDBJ databases">
        <authorList>
            <person name="Giordano A."/>
            <person name="Delledonne M."/>
            <person name="Fogher C."/>
            <person name="Marchetti S."/>
        </authorList>
    </citation>
    <scope>NUCLEOTIDE SEQUENCE [GENOMIC DNA]</scope>
    <source>
        <strain>cv. Maple Arrow</strain>
    </source>
</reference>
<reference key="4">
    <citation type="journal article" date="1984" name="J. Biol. Chem.">
        <title>Molecular cloning and analysis of a gene coding for the Bowman-Birk protease inhibitor in soybean.</title>
        <authorList>
            <person name="Hammond R.W."/>
            <person name="Foard D.E."/>
            <person name="Larkins B.A."/>
        </authorList>
    </citation>
    <scope>NUCLEOTIDE SEQUENCE [GENOMIC DNA]</scope>
</reference>
<reference key="5">
    <citation type="journal article" date="1985" name="J. Biol. Chem.">
        <authorList>
            <person name="Hammond R.W."/>
            <person name="Foard D.E."/>
            <person name="Larkins B.A."/>
        </authorList>
    </citation>
    <scope>ERRATUM OF PUBMED:6086657</scope>
    <scope>SEQUENCE REVISION</scope>
</reference>
<reference key="6">
    <citation type="journal article" date="1977" name="J. Biochem.">
        <title>Studies on soybean trypsin inhibitors. XI. Complete amino acid sequence of a soybean trypsin-chymotrypsin-elastase inhibitor, C-II.</title>
        <authorList>
            <person name="Odani S."/>
            <person name="Ikenaka T."/>
        </authorList>
    </citation>
    <scope>PROTEIN SEQUENCE OF 8-83</scope>
</reference>
<comment type="similarity">
    <text evidence="4">Belongs to the Bowman-Birk serine protease inhibitor family.</text>
</comment>
<comment type="sequence caution" evidence="4">
    <conflict type="erroneous initiation">
        <sequence resource="EMBL-CDS" id="AAA33952"/>
    </conflict>
    <text>Extended N-terminus.</text>
</comment>
<feature type="propeptide" id="PRO_0000003282" evidence="3">
    <location>
        <begin position="1"/>
        <end position="7"/>
    </location>
</feature>
<feature type="chain" id="PRO_0000003283" description="Bowman-Birk type proteinase inhibitor C-II">
    <location>
        <begin position="8"/>
        <end position="83"/>
    </location>
</feature>
<feature type="site" description="Reactive bond for elastase" evidence="1">
    <location>
        <begin position="29"/>
        <end position="30"/>
    </location>
</feature>
<feature type="site" description="Reactive bond for trypsin and chymotrypsin">
    <location>
        <begin position="56"/>
        <end position="57"/>
    </location>
</feature>
<feature type="disulfide bond" evidence="2">
    <location>
        <begin position="21"/>
        <end position="75"/>
    </location>
</feature>
<feature type="disulfide bond" evidence="2">
    <location>
        <begin position="22"/>
        <end position="37"/>
    </location>
</feature>
<feature type="disulfide bond" evidence="2">
    <location>
        <begin position="25"/>
        <end position="71"/>
    </location>
</feature>
<feature type="disulfide bond" evidence="2">
    <location>
        <begin position="27"/>
        <end position="35"/>
    </location>
</feature>
<feature type="disulfide bond" evidence="2">
    <location>
        <begin position="45"/>
        <end position="52"/>
    </location>
</feature>
<feature type="disulfide bond" evidence="2">
    <location>
        <begin position="49"/>
        <end position="64"/>
    </location>
</feature>
<feature type="disulfide bond" evidence="2">
    <location>
        <begin position="54"/>
        <end position="62"/>
    </location>
</feature>
<feature type="sequence conflict" description="In Ref. 4; AAA33952." evidence="4" ref="4">
    <original>N</original>
    <variation>D</variation>
    <location>
        <position position="4"/>
    </location>
</feature>
<proteinExistence type="evidence at protein level"/>
<organism>
    <name type="scientific">Glycine max</name>
    <name type="common">Soybean</name>
    <name type="synonym">Glycine hispida</name>
    <dbReference type="NCBI Taxonomy" id="3847"/>
    <lineage>
        <taxon>Eukaryota</taxon>
        <taxon>Viridiplantae</taxon>
        <taxon>Streptophyta</taxon>
        <taxon>Embryophyta</taxon>
        <taxon>Tracheophyta</taxon>
        <taxon>Spermatophyta</taxon>
        <taxon>Magnoliopsida</taxon>
        <taxon>eudicotyledons</taxon>
        <taxon>Gunneridae</taxon>
        <taxon>Pentapetalae</taxon>
        <taxon>rosids</taxon>
        <taxon>fabids</taxon>
        <taxon>Fabales</taxon>
        <taxon>Fabaceae</taxon>
        <taxon>Papilionoideae</taxon>
        <taxon>50 kb inversion clade</taxon>
        <taxon>NPAAA clade</taxon>
        <taxon>indigoferoid/millettioid clade</taxon>
        <taxon>Phaseoleae</taxon>
        <taxon>Glycine</taxon>
        <taxon>Glycine subgen. Soja</taxon>
    </lineage>
</organism>
<accession>P01063</accession>
<evidence type="ECO:0000250" key="1"/>
<evidence type="ECO:0000250" key="2">
    <source>
        <dbReference type="UniProtKB" id="P80321"/>
    </source>
</evidence>
<evidence type="ECO:0000269" key="3">
    <source>
    </source>
</evidence>
<evidence type="ECO:0000305" key="4"/>
<dbReference type="EMBL" id="M20732">
    <property type="protein sequence ID" value="AAA33953.1"/>
    <property type="molecule type" value="mRNA"/>
</dbReference>
<dbReference type="EMBL" id="X68705">
    <property type="protein sequence ID" value="CAA48656.1"/>
    <property type="molecule type" value="mRNA"/>
</dbReference>
<dbReference type="EMBL" id="X76727">
    <property type="protein sequence ID" value="CAA54144.1"/>
    <property type="molecule type" value="Genomic_DNA"/>
</dbReference>
<dbReference type="EMBL" id="K01967">
    <property type="protein sequence ID" value="AAA33952.1"/>
    <property type="status" value="ALT_INIT"/>
    <property type="molecule type" value="Genomic_DNA"/>
</dbReference>
<dbReference type="PIR" id="A22636">
    <property type="entry name" value="TISYC2"/>
</dbReference>
<dbReference type="PIR" id="S07405">
    <property type="entry name" value="S07405"/>
</dbReference>
<dbReference type="RefSeq" id="NP_001238409.1">
    <property type="nucleotide sequence ID" value="NM_001251480.1"/>
</dbReference>
<dbReference type="SMR" id="P01063"/>
<dbReference type="STRING" id="3847.P01063"/>
<dbReference type="MEROPS" id="I12.001"/>
<dbReference type="MEROPS" id="I12.008"/>
<dbReference type="PaxDb" id="3847-GLYMA09G28706.1"/>
<dbReference type="EnsemblPlants" id="KRH15895">
    <property type="protein sequence ID" value="KRH15895"/>
    <property type="gene ID" value="GLYMA_14G117600"/>
</dbReference>
<dbReference type="EnsemblPlants" id="KRH38802">
    <property type="protein sequence ID" value="KRH38802"/>
    <property type="gene ID" value="GLYMA_09G158800"/>
</dbReference>
<dbReference type="GeneID" id="547818"/>
<dbReference type="Gramene" id="KRH15895">
    <property type="protein sequence ID" value="KRH15895"/>
    <property type="gene ID" value="GLYMA_14G117600"/>
</dbReference>
<dbReference type="Gramene" id="KRH38802">
    <property type="protein sequence ID" value="KRH38802"/>
    <property type="gene ID" value="GLYMA_09G158800"/>
</dbReference>
<dbReference type="KEGG" id="gmx:547818"/>
<dbReference type="InParanoid" id="P01063"/>
<dbReference type="OrthoDB" id="1928998at2759"/>
<dbReference type="Proteomes" id="UP000008827">
    <property type="component" value="Chromosome 14"/>
</dbReference>
<dbReference type="Proteomes" id="UP000008827">
    <property type="component" value="Chromosome 9"/>
</dbReference>
<dbReference type="GO" id="GO:0005576">
    <property type="term" value="C:extracellular region"/>
    <property type="evidence" value="ECO:0007669"/>
    <property type="project" value="InterPro"/>
</dbReference>
<dbReference type="GO" id="GO:0004867">
    <property type="term" value="F:serine-type endopeptidase inhibitor activity"/>
    <property type="evidence" value="ECO:0007669"/>
    <property type="project" value="UniProtKB-KW"/>
</dbReference>
<dbReference type="CDD" id="cd00023">
    <property type="entry name" value="BBI"/>
    <property type="match status" value="1"/>
</dbReference>
<dbReference type="FunFam" id="2.10.69.10:FF:000001">
    <property type="entry name" value="Bowman-Birk type proteinase inhibitor"/>
    <property type="match status" value="1"/>
</dbReference>
<dbReference type="Gene3D" id="2.10.69.10">
    <property type="entry name" value="Cysteine Protease (Bromelain) Inhibitor, subunit H"/>
    <property type="match status" value="1"/>
</dbReference>
<dbReference type="InterPro" id="IPR035995">
    <property type="entry name" value="Bowman-Birk_prot_inh"/>
</dbReference>
<dbReference type="InterPro" id="IPR000877">
    <property type="entry name" value="Prot_inh_BBI"/>
</dbReference>
<dbReference type="Pfam" id="PF00228">
    <property type="entry name" value="Bowman-Birk_leg"/>
    <property type="match status" value="2"/>
</dbReference>
<dbReference type="SMART" id="SM00269">
    <property type="entry name" value="BowB"/>
    <property type="match status" value="1"/>
</dbReference>
<dbReference type="SUPFAM" id="SSF57247">
    <property type="entry name" value="Bowman-Birk inhibitor, BBI"/>
    <property type="match status" value="1"/>
</dbReference>
<dbReference type="PROSITE" id="PS00281">
    <property type="entry name" value="BOWMAN_BIRK"/>
    <property type="match status" value="1"/>
</dbReference>
<keyword id="KW-0903">Direct protein sequencing</keyword>
<keyword id="KW-1015">Disulfide bond</keyword>
<keyword id="KW-0646">Protease inhibitor</keyword>
<keyword id="KW-1185">Reference proteome</keyword>
<keyword id="KW-0722">Serine protease inhibitor</keyword>